<sequence>MPGNSRRRGAVRKSGTNKGTTVGSGGQRRRALEGRGPTPPAYLRPNHPAAKRNQSSPHRPVKRTDETETVLGRNPVLECLRAGVPATALYVALGTEVDKRLTESVMRAADVGVAILEVPRTYLDRITNNHLHQGIALQVPPYHYVHSDDLLAAATDSPPALLVALDNISDPRNLGAIVRSVAAFSGHGILIPQRRSASVTAVAWRTSAGAAARIPVARATNLTRALKVWADQGLRVIGLDHDGDTALDDLDGTDPLAVVVGSEGKGLSRLVRHSCDEVVSIPMAGQVESLNASVAVGVVLAEIARQRRL</sequence>
<evidence type="ECO:0000250" key="1"/>
<evidence type="ECO:0000256" key="2">
    <source>
        <dbReference type="SAM" id="MobiDB-lite"/>
    </source>
</evidence>
<evidence type="ECO:0000305" key="3"/>
<organism>
    <name type="scientific">Mycobacterium leprae (strain TN)</name>
    <dbReference type="NCBI Taxonomy" id="272631"/>
    <lineage>
        <taxon>Bacteria</taxon>
        <taxon>Bacillati</taxon>
        <taxon>Actinomycetota</taxon>
        <taxon>Actinomycetes</taxon>
        <taxon>Mycobacteriales</taxon>
        <taxon>Mycobacteriaceae</taxon>
        <taxon>Mycobacterium</taxon>
    </lineage>
</organism>
<comment type="similarity">
    <text evidence="3">Belongs to the class IV-like SAM-binding methyltransferase superfamily. RNA methyltransferase TrmH family.</text>
</comment>
<comment type="sequence caution" evidence="3">
    <conflict type="erroneous initiation">
        <sequence resource="EMBL-CDS" id="CAC29832"/>
    </conflict>
</comment>
<accession>Q9CCW4</accession>
<protein>
    <recommendedName>
        <fullName>Uncharacterized tRNA/rRNA methyltransferase ML0324</fullName>
        <ecNumber>2.1.1.-</ecNumber>
    </recommendedName>
</protein>
<keyword id="KW-0489">Methyltransferase</keyword>
<keyword id="KW-1185">Reference proteome</keyword>
<keyword id="KW-0949">S-adenosyl-L-methionine</keyword>
<keyword id="KW-0808">Transferase</keyword>
<feature type="chain" id="PRO_0000379573" description="Uncharacterized tRNA/rRNA methyltransferase ML0324">
    <location>
        <begin position="1"/>
        <end position="309"/>
    </location>
</feature>
<feature type="region of interest" description="Disordered" evidence="2">
    <location>
        <begin position="1"/>
        <end position="69"/>
    </location>
</feature>
<feature type="compositionally biased region" description="Basic residues" evidence="2">
    <location>
        <begin position="1"/>
        <end position="11"/>
    </location>
</feature>
<feature type="binding site" evidence="1">
    <location>
        <position position="261"/>
    </location>
    <ligand>
        <name>S-adenosyl-L-methionine</name>
        <dbReference type="ChEBI" id="CHEBI:59789"/>
    </ligand>
</feature>
<feature type="binding site" evidence="1">
    <location>
        <position position="281"/>
    </location>
    <ligand>
        <name>S-adenosyl-L-methionine</name>
        <dbReference type="ChEBI" id="CHEBI:59789"/>
    </ligand>
</feature>
<feature type="binding site" evidence="1">
    <location>
        <position position="290"/>
    </location>
    <ligand>
        <name>S-adenosyl-L-methionine</name>
        <dbReference type="ChEBI" id="CHEBI:59789"/>
    </ligand>
</feature>
<dbReference type="EC" id="2.1.1.-"/>
<dbReference type="EMBL" id="AL583918">
    <property type="protein sequence ID" value="CAC29832.1"/>
    <property type="status" value="ALT_INIT"/>
    <property type="molecule type" value="Genomic_DNA"/>
</dbReference>
<dbReference type="PIR" id="D86949">
    <property type="entry name" value="D86949"/>
</dbReference>
<dbReference type="SMR" id="Q9CCW4"/>
<dbReference type="STRING" id="272631.gene:17574143"/>
<dbReference type="KEGG" id="mle:ML0324"/>
<dbReference type="Leproma" id="ML0324"/>
<dbReference type="eggNOG" id="COG0566">
    <property type="taxonomic scope" value="Bacteria"/>
</dbReference>
<dbReference type="HOGENOM" id="CLU_021322_0_0_11"/>
<dbReference type="Proteomes" id="UP000000806">
    <property type="component" value="Chromosome"/>
</dbReference>
<dbReference type="GO" id="GO:0005829">
    <property type="term" value="C:cytosol"/>
    <property type="evidence" value="ECO:0007669"/>
    <property type="project" value="TreeGrafter"/>
</dbReference>
<dbReference type="GO" id="GO:0003723">
    <property type="term" value="F:RNA binding"/>
    <property type="evidence" value="ECO:0007669"/>
    <property type="project" value="InterPro"/>
</dbReference>
<dbReference type="GO" id="GO:0008173">
    <property type="term" value="F:RNA methyltransferase activity"/>
    <property type="evidence" value="ECO:0007669"/>
    <property type="project" value="InterPro"/>
</dbReference>
<dbReference type="GO" id="GO:0032259">
    <property type="term" value="P:methylation"/>
    <property type="evidence" value="ECO:0007669"/>
    <property type="project" value="UniProtKB-KW"/>
</dbReference>
<dbReference type="GO" id="GO:0006396">
    <property type="term" value="P:RNA processing"/>
    <property type="evidence" value="ECO:0007669"/>
    <property type="project" value="InterPro"/>
</dbReference>
<dbReference type="CDD" id="cd18103">
    <property type="entry name" value="SpoU-like_RlmB"/>
    <property type="match status" value="1"/>
</dbReference>
<dbReference type="FunFam" id="3.30.1330.30:FF:000024">
    <property type="entry name" value="Putative tRNA/rRNA methyltransferase"/>
    <property type="match status" value="1"/>
</dbReference>
<dbReference type="FunFam" id="3.40.1280.10:FF:000015">
    <property type="entry name" value="Putative tRNA/rRNA methyltransferase"/>
    <property type="match status" value="1"/>
</dbReference>
<dbReference type="Gene3D" id="3.30.1330.30">
    <property type="match status" value="1"/>
</dbReference>
<dbReference type="Gene3D" id="3.40.1280.10">
    <property type="match status" value="1"/>
</dbReference>
<dbReference type="InterPro" id="IPR029028">
    <property type="entry name" value="Alpha/beta_knot_MTases"/>
</dbReference>
<dbReference type="InterPro" id="IPR029064">
    <property type="entry name" value="Ribosomal_eL30-like_sf"/>
</dbReference>
<dbReference type="InterPro" id="IPR004441">
    <property type="entry name" value="rRNA_MeTrfase_TrmH"/>
</dbReference>
<dbReference type="InterPro" id="IPR001537">
    <property type="entry name" value="SpoU_MeTrfase"/>
</dbReference>
<dbReference type="InterPro" id="IPR013123">
    <property type="entry name" value="SpoU_subst-bd"/>
</dbReference>
<dbReference type="InterPro" id="IPR029026">
    <property type="entry name" value="tRNA_m1G_MTases_N"/>
</dbReference>
<dbReference type="NCBIfam" id="TIGR00186">
    <property type="entry name" value="rRNA_methyl_3"/>
    <property type="match status" value="1"/>
</dbReference>
<dbReference type="PANTHER" id="PTHR46429">
    <property type="entry name" value="23S RRNA (GUANOSINE-2'-O-)-METHYLTRANSFERASE RLMB"/>
    <property type="match status" value="1"/>
</dbReference>
<dbReference type="PANTHER" id="PTHR46429:SF1">
    <property type="entry name" value="23S RRNA (GUANOSINE-2'-O-)-METHYLTRANSFERASE RLMB"/>
    <property type="match status" value="1"/>
</dbReference>
<dbReference type="Pfam" id="PF00588">
    <property type="entry name" value="SpoU_methylase"/>
    <property type="match status" value="1"/>
</dbReference>
<dbReference type="Pfam" id="PF08032">
    <property type="entry name" value="SpoU_sub_bind"/>
    <property type="match status" value="1"/>
</dbReference>
<dbReference type="SMART" id="SM00967">
    <property type="entry name" value="SpoU_sub_bind"/>
    <property type="match status" value="1"/>
</dbReference>
<dbReference type="SUPFAM" id="SSF75217">
    <property type="entry name" value="alpha/beta knot"/>
    <property type="match status" value="1"/>
</dbReference>
<dbReference type="SUPFAM" id="SSF55315">
    <property type="entry name" value="L30e-like"/>
    <property type="match status" value="1"/>
</dbReference>
<reference key="1">
    <citation type="journal article" date="2001" name="Nature">
        <title>Massive gene decay in the leprosy bacillus.</title>
        <authorList>
            <person name="Cole S.T."/>
            <person name="Eiglmeier K."/>
            <person name="Parkhill J."/>
            <person name="James K.D."/>
            <person name="Thomson N.R."/>
            <person name="Wheeler P.R."/>
            <person name="Honore N."/>
            <person name="Garnier T."/>
            <person name="Churcher C.M."/>
            <person name="Harris D.E."/>
            <person name="Mungall K.L."/>
            <person name="Basham D."/>
            <person name="Brown D."/>
            <person name="Chillingworth T."/>
            <person name="Connor R."/>
            <person name="Davies R.M."/>
            <person name="Devlin K."/>
            <person name="Duthoy S."/>
            <person name="Feltwell T."/>
            <person name="Fraser A."/>
            <person name="Hamlin N."/>
            <person name="Holroyd S."/>
            <person name="Hornsby T."/>
            <person name="Jagels K."/>
            <person name="Lacroix C."/>
            <person name="Maclean J."/>
            <person name="Moule S."/>
            <person name="Murphy L.D."/>
            <person name="Oliver K."/>
            <person name="Quail M.A."/>
            <person name="Rajandream M.A."/>
            <person name="Rutherford K.M."/>
            <person name="Rutter S."/>
            <person name="Seeger K."/>
            <person name="Simon S."/>
            <person name="Simmonds M."/>
            <person name="Skelton J."/>
            <person name="Squares R."/>
            <person name="Squares S."/>
            <person name="Stevens K."/>
            <person name="Taylor K."/>
            <person name="Whitehead S."/>
            <person name="Woodward J.R."/>
            <person name="Barrell B.G."/>
        </authorList>
    </citation>
    <scope>NUCLEOTIDE SEQUENCE [LARGE SCALE GENOMIC DNA]</scope>
    <source>
        <strain>TN</strain>
    </source>
</reference>
<name>Y324_MYCLE</name>
<gene>
    <name type="ordered locus">ML0324</name>
</gene>
<proteinExistence type="inferred from homology"/>